<protein>
    <recommendedName>
        <fullName evidence="1">Large ribosomal subunit protein bL27</fullName>
    </recommendedName>
    <alternativeName>
        <fullName evidence="3">50S ribosomal protein L27</fullName>
    </alternativeName>
</protein>
<organism>
    <name type="scientific">Paramagnetospirillum magneticum (strain ATCC 700264 / AMB-1)</name>
    <name type="common">Magnetospirillum magneticum</name>
    <dbReference type="NCBI Taxonomy" id="342108"/>
    <lineage>
        <taxon>Bacteria</taxon>
        <taxon>Pseudomonadati</taxon>
        <taxon>Pseudomonadota</taxon>
        <taxon>Alphaproteobacteria</taxon>
        <taxon>Rhodospirillales</taxon>
        <taxon>Magnetospirillaceae</taxon>
        <taxon>Paramagnetospirillum</taxon>
    </lineage>
</organism>
<evidence type="ECO:0000255" key="1">
    <source>
        <dbReference type="HAMAP-Rule" id="MF_00539"/>
    </source>
</evidence>
<evidence type="ECO:0000256" key="2">
    <source>
        <dbReference type="SAM" id="MobiDB-lite"/>
    </source>
</evidence>
<evidence type="ECO:0000305" key="3"/>
<accession>Q2VZU3</accession>
<keyword id="KW-0687">Ribonucleoprotein</keyword>
<keyword id="KW-0689">Ribosomal protein</keyword>
<proteinExistence type="inferred from homology"/>
<gene>
    <name evidence="1" type="primary">rpmA</name>
    <name type="ordered locus">amb4078</name>
</gene>
<feature type="chain" id="PRO_1000017509" description="Large ribosomal subunit protein bL27">
    <location>
        <begin position="1"/>
        <end position="89"/>
    </location>
</feature>
<feature type="region of interest" description="Disordered" evidence="2">
    <location>
        <begin position="1"/>
        <end position="20"/>
    </location>
</feature>
<sequence length="89" mass="9482">MAHKKAGGSSRNGRDSAGQRLGVKKFGGELVIPGNIIVRQRGTKFYPGTNVGMGKDHTLFATAMGKVSFKHKAEGRTFVVVEPLPEAAE</sequence>
<dbReference type="EMBL" id="AP007255">
    <property type="protein sequence ID" value="BAE52882.1"/>
    <property type="molecule type" value="Genomic_DNA"/>
</dbReference>
<dbReference type="RefSeq" id="WP_009870504.1">
    <property type="nucleotide sequence ID" value="NC_007626.1"/>
</dbReference>
<dbReference type="SMR" id="Q2VZU3"/>
<dbReference type="STRING" id="342108.amb4078"/>
<dbReference type="KEGG" id="mag:amb4078"/>
<dbReference type="HOGENOM" id="CLU_095424_4_0_5"/>
<dbReference type="OrthoDB" id="9803474at2"/>
<dbReference type="Proteomes" id="UP000007058">
    <property type="component" value="Chromosome"/>
</dbReference>
<dbReference type="GO" id="GO:0022625">
    <property type="term" value="C:cytosolic large ribosomal subunit"/>
    <property type="evidence" value="ECO:0007669"/>
    <property type="project" value="TreeGrafter"/>
</dbReference>
<dbReference type="GO" id="GO:0003735">
    <property type="term" value="F:structural constituent of ribosome"/>
    <property type="evidence" value="ECO:0007669"/>
    <property type="project" value="InterPro"/>
</dbReference>
<dbReference type="GO" id="GO:0006412">
    <property type="term" value="P:translation"/>
    <property type="evidence" value="ECO:0007669"/>
    <property type="project" value="UniProtKB-UniRule"/>
</dbReference>
<dbReference type="FunFam" id="2.40.50.100:FF:000020">
    <property type="entry name" value="50S ribosomal protein L27"/>
    <property type="match status" value="1"/>
</dbReference>
<dbReference type="Gene3D" id="2.40.50.100">
    <property type="match status" value="1"/>
</dbReference>
<dbReference type="HAMAP" id="MF_00539">
    <property type="entry name" value="Ribosomal_bL27"/>
    <property type="match status" value="1"/>
</dbReference>
<dbReference type="InterPro" id="IPR001684">
    <property type="entry name" value="Ribosomal_bL27"/>
</dbReference>
<dbReference type="InterPro" id="IPR018261">
    <property type="entry name" value="Ribosomal_bL27_CS"/>
</dbReference>
<dbReference type="NCBIfam" id="TIGR00062">
    <property type="entry name" value="L27"/>
    <property type="match status" value="1"/>
</dbReference>
<dbReference type="PANTHER" id="PTHR15893:SF0">
    <property type="entry name" value="LARGE RIBOSOMAL SUBUNIT PROTEIN BL27M"/>
    <property type="match status" value="1"/>
</dbReference>
<dbReference type="PANTHER" id="PTHR15893">
    <property type="entry name" value="RIBOSOMAL PROTEIN L27"/>
    <property type="match status" value="1"/>
</dbReference>
<dbReference type="Pfam" id="PF01016">
    <property type="entry name" value="Ribosomal_L27"/>
    <property type="match status" value="1"/>
</dbReference>
<dbReference type="PRINTS" id="PR00063">
    <property type="entry name" value="RIBOSOMALL27"/>
</dbReference>
<dbReference type="SUPFAM" id="SSF110324">
    <property type="entry name" value="Ribosomal L27 protein-like"/>
    <property type="match status" value="1"/>
</dbReference>
<dbReference type="PROSITE" id="PS00831">
    <property type="entry name" value="RIBOSOMAL_L27"/>
    <property type="match status" value="1"/>
</dbReference>
<comment type="similarity">
    <text evidence="1">Belongs to the bacterial ribosomal protein bL27 family.</text>
</comment>
<name>RL27_PARM1</name>
<reference key="1">
    <citation type="journal article" date="2005" name="DNA Res.">
        <title>Complete genome sequence of the facultative anaerobic magnetotactic bacterium Magnetospirillum sp. strain AMB-1.</title>
        <authorList>
            <person name="Matsunaga T."/>
            <person name="Okamura Y."/>
            <person name="Fukuda Y."/>
            <person name="Wahyudi A.T."/>
            <person name="Murase Y."/>
            <person name="Takeyama H."/>
        </authorList>
    </citation>
    <scope>NUCLEOTIDE SEQUENCE [LARGE SCALE GENOMIC DNA]</scope>
    <source>
        <strain>ATCC 700264 / AMB-1</strain>
    </source>
</reference>